<accession>Q8T062</accession>
<accession>Q9I7I4</accession>
<comment type="function">
    <text evidence="9 10 11">Metalloendoprotease which cleaves peptides at the amino side of hydrophobic residues - such as the hormones Akh and Dh31, and the neuropeptides Allatostatins (AST1, AST2, AST3 and AST4), Crz, Drosulfakinins (DSK-I and DSK-II), Lk, sNPF and the tachykinin peptides TK-1, TK-2, TK-4 and TK-5 (PubMed:27919317). Functions in female fertility, memory formation and may also act in regulating insulin signaling and food intake (PubMed:24395329, PubMed:27629706). Likely to be involved in controlling feeding behavior and the expression of insulin-like peptides by cleaving various regulatory peptides that include certain Drosulfakinins, Allatostatins and tachykinin peptides (PubMed:27919317). Required in females for normal patterns of egg laying and hatching (PubMed:24395329). Required in the dorsal paired medial neurons for the proper formation of long-term (LTM) and middle-term memories (MTM) (PubMed:27629706). Also required in the mushroom body neurons where it functions redundantly with neprilysins Nep2 and Nep3, in normal LTM formation (PubMed:27629706).</text>
</comment>
<comment type="function">
    <molecule>Isoform A</molecule>
    <text evidence="7 8">Cleaves angiotensin-1 and tachykinin neuropeptide substance P (PubMed:19880729). Functions in maintaining muscle integrity, possibly independently of its endopeptidase activity (PubMed:22583317).</text>
</comment>
<comment type="catalytic activity">
    <reaction evidence="7 11">
        <text>Preferential cleavage of polypeptides between hydrophobic residues, particularly with Phe or Tyr at P1'.</text>
        <dbReference type="EC" id="3.4.24.11"/>
    </reaction>
</comment>
<comment type="cofactor">
    <cofactor evidence="1">
        <name>Zn(2+)</name>
        <dbReference type="ChEBI" id="CHEBI:29105"/>
    </cofactor>
    <text evidence="1">Binds 1 zinc ion per subunit.</text>
</comment>
<comment type="biophysicochemical properties">
    <phDependence>
        <text evidence="7">Optimum pH is 7.</text>
    </phDependence>
</comment>
<comment type="subunit">
    <molecule>Isoform A</molecule>
    <text evidence="8">Interacts (via intracellular domain) with the putative carbohydrate kinase CG3534.</text>
</comment>
<comment type="subcellular location">
    <molecule>Isoform A</molecule>
    <subcellularLocation>
        <location evidence="7 11">Cell membrane</location>
        <topology evidence="13">Single-pass type II membrane protein</topology>
    </subcellularLocation>
    <subcellularLocation>
        <location evidence="8">Sarcoplasmic reticulum</location>
    </subcellularLocation>
    <text evidence="8 11">In larval muscles, localizes to both the cell surface and sarcoplasmic reticulum membranes that are continuous with the nuclear membrane.</text>
</comment>
<comment type="subcellular location">
    <molecule>Isoform B</molecule>
    <subcellularLocation>
        <location evidence="7">Cytoplasm</location>
    </subcellularLocation>
</comment>
<comment type="alternative products">
    <event type="alternative initiation"/>
    <isoform>
        <id>Q8T062-1</id>
        <name evidence="12">A</name>
        <sequence type="displayed"/>
    </isoform>
    <isoform>
        <id>Q8T062-2</id>
        <name evidence="12">B</name>
        <name evidence="16">C</name>
        <sequence type="described" ref="VSP_059156"/>
    </isoform>
</comment>
<comment type="tissue specificity">
    <text evidence="7 8 9">Expressed in the gonads and testes of adults, and the adult and larval brain (at protein level) (PubMed:19880729). In embryos, expressed in the pericardial, muscle founder and glia cells (at protein level) (PubMed:19880729). In stage 12 embryos, expressed in specific dorsal muscle founder cells such as DA1 and DO2, and also in the certain pericardial progenitor cells where expression persists throughout embryogenesis (PubMed:19880729, PubMed:24395329). Expressed in the glia cells of the embryonic, larval and adult central nervous system (PubMed:19880729, PubMed:24395329). Expressed in the somatic muscles of larvae, pupae and adults (PubMed:22583317). Isoform A: Detected in the male abdomen (at protein level) (PubMed:19880729). Isoform B: Not detected in the male or female abdomen (at protein level) (PubMed:19880729).</text>
</comment>
<comment type="developmental stage">
    <text evidence="7">Expressed throughout development and in adults (at protein level). Isoform A: Highly expressed in adults and low levels of expression in larvae and pupae (at protein level). Isoform B: High levels of expression in larvae (at protein level), and low levels of expression in embryos (4-24 hr after oviposition), pupae and adults (at protein level).</text>
</comment>
<comment type="disruption phenotype">
    <text evidence="8 9 10 11">RNAi-mediated knockdown females lay fewer eggs and display a reduced hatch rate when mated to wild-type males (PubMed:24395329). Wild-type females mated to males that undergo RNAi-mediated knockdown, lay the same number of eggs and have a similar hatch rate to those mated to wild-type males (PubMed:24395329). RNAi-mediated knockdown in the dorsal paired medial neurons impairs middle-term (MTM) and long-term memory (LTM), but has no effect on normal aversion learning and anesthesia-resistant memory (ARM) (PubMed:27629706). RNAi-mediated knockdown in all mushroom body neurons has no effect on learning, ARM and LTM (PubMed:27629706). However, simultaneous knockdown with Nep3 does impair LTM, and simultaneous knockdown with both Nep2 and Nep3 results in a further reduction in LTM formation (PubMed:27629706). However, simultaneous knockdown with only Nep2 has no effect on LTM formation (PubMed:27629706). RNAi-mediated knockdown in somatic muscles is pupal lethal (PubMed:22583317, PubMed:27919317). Muscles of second instar larvae display signs of necrotic degeneration, and undergo fewer and weaker contractions leading to a reduction in their crawling speed (PubMed:22583317). Also displays reduced food intake after 10 minutes (47% of control intake) and 20 minutes of feeding (72% of control intake), but not after 40 minutes (PubMed:27919317). Displays an 82% reduction in expression of insulin-like peptide 4 (PubMed:27919317).</text>
</comment>
<comment type="similarity">
    <text evidence="4 13">Belongs to the peptidase M13 family.</text>
</comment>
<organism evidence="17">
    <name type="scientific">Drosophila melanogaster</name>
    <name type="common">Fruit fly</name>
    <dbReference type="NCBI Taxonomy" id="7227"/>
    <lineage>
        <taxon>Eukaryota</taxon>
        <taxon>Metazoa</taxon>
        <taxon>Ecdysozoa</taxon>
        <taxon>Arthropoda</taxon>
        <taxon>Hexapoda</taxon>
        <taxon>Insecta</taxon>
        <taxon>Pterygota</taxon>
        <taxon>Neoptera</taxon>
        <taxon>Endopterygota</taxon>
        <taxon>Diptera</taxon>
        <taxon>Brachycera</taxon>
        <taxon>Muscomorpha</taxon>
        <taxon>Ephydroidea</taxon>
        <taxon>Drosophilidae</taxon>
        <taxon>Drosophila</taxon>
        <taxon>Sophophora</taxon>
    </lineage>
</organism>
<dbReference type="EC" id="3.4.24.11" evidence="7"/>
<dbReference type="EMBL" id="AE014297">
    <property type="protein sequence ID" value="AAG22165.3"/>
    <property type="molecule type" value="Genomic_DNA"/>
</dbReference>
<dbReference type="EMBL" id="AE014297">
    <property type="protein sequence ID" value="AAN14361.2"/>
    <property type="molecule type" value="Genomic_DNA"/>
</dbReference>
<dbReference type="EMBL" id="AE014297">
    <property type="protein sequence ID" value="AGB96153.1"/>
    <property type="molecule type" value="Genomic_DNA"/>
</dbReference>
<dbReference type="EMBL" id="AY069535">
    <property type="protein sequence ID" value="AAL39680.1"/>
    <property type="molecule type" value="mRNA"/>
</dbReference>
<dbReference type="EMBL" id="BT099713">
    <property type="protein sequence ID" value="ACV53077.1"/>
    <property type="molecule type" value="mRNA"/>
</dbReference>
<dbReference type="RefSeq" id="NP_001262773.1">
    <molecule id="Q8T062-2"/>
    <property type="nucleotide sequence ID" value="NM_001275844.1"/>
</dbReference>
<dbReference type="RefSeq" id="NP_650904.3">
    <molecule id="Q8T062-1"/>
    <property type="nucleotide sequence ID" value="NM_142647.3"/>
</dbReference>
<dbReference type="RefSeq" id="NP_732540.2">
    <molecule id="Q8T062-2"/>
    <property type="nucleotide sequence ID" value="NM_169912.1"/>
</dbReference>
<dbReference type="SMR" id="Q8T062"/>
<dbReference type="FunCoup" id="Q8T062">
    <property type="interactions" value="4"/>
</dbReference>
<dbReference type="STRING" id="7227.FBpp0083345"/>
<dbReference type="MEROPS" id="M13.014"/>
<dbReference type="GlyCosmos" id="Q8T062">
    <property type="glycosylation" value="6 sites, No reported glycans"/>
</dbReference>
<dbReference type="GlyGen" id="Q8T062">
    <property type="glycosylation" value="6 sites"/>
</dbReference>
<dbReference type="PaxDb" id="7227-FBpp0083345"/>
<dbReference type="DNASU" id="42449"/>
<dbReference type="EnsemblMetazoa" id="FBtr0083936">
    <molecule id="Q8T062-2"/>
    <property type="protein sequence ID" value="FBpp0083344"/>
    <property type="gene ID" value="FBgn0038818"/>
</dbReference>
<dbReference type="EnsemblMetazoa" id="FBtr0083937">
    <molecule id="Q8T062-1"/>
    <property type="protein sequence ID" value="FBpp0083345"/>
    <property type="gene ID" value="FBgn0038818"/>
</dbReference>
<dbReference type="EnsemblMetazoa" id="FBtr0334642">
    <molecule id="Q8T062-2"/>
    <property type="protein sequence ID" value="FBpp0306704"/>
    <property type="gene ID" value="FBgn0038818"/>
</dbReference>
<dbReference type="GeneID" id="42449"/>
<dbReference type="KEGG" id="dme:Dmel_CG4058"/>
<dbReference type="UCSC" id="CG4058-RA">
    <molecule id="Q8T062-1"/>
    <property type="organism name" value="d. melanogaster"/>
</dbReference>
<dbReference type="UCSC" id="CG4058-RB">
    <property type="organism name" value="d. melanogaster"/>
</dbReference>
<dbReference type="AGR" id="FB:FBgn0038818"/>
<dbReference type="CTD" id="42449"/>
<dbReference type="FlyBase" id="FBgn0038818">
    <property type="gene designation" value="Nep4"/>
</dbReference>
<dbReference type="VEuPathDB" id="VectorBase:FBgn0038818"/>
<dbReference type="eggNOG" id="KOG3624">
    <property type="taxonomic scope" value="Eukaryota"/>
</dbReference>
<dbReference type="GeneTree" id="ENSGT00940000171376"/>
<dbReference type="InParanoid" id="Q8T062"/>
<dbReference type="OMA" id="DSHFNWQ"/>
<dbReference type="OrthoDB" id="6475849at2759"/>
<dbReference type="PhylomeDB" id="Q8T062"/>
<dbReference type="BRENDA" id="3.4.24.11">
    <property type="organism ID" value="1994"/>
</dbReference>
<dbReference type="Reactome" id="R-DME-2022377">
    <property type="pathway name" value="Metabolism of Angiotensinogen to Angiotensins"/>
</dbReference>
<dbReference type="Reactome" id="R-DME-5578768">
    <property type="pathway name" value="Physiological factors"/>
</dbReference>
<dbReference type="Reactome" id="R-DME-6798695">
    <property type="pathway name" value="Neutrophil degranulation"/>
</dbReference>
<dbReference type="BioGRID-ORCS" id="42449">
    <property type="hits" value="0 hits in 3 CRISPR screens"/>
</dbReference>
<dbReference type="GenomeRNAi" id="42449"/>
<dbReference type="PRO" id="PR:Q8T062"/>
<dbReference type="Proteomes" id="UP000000803">
    <property type="component" value="Chromosome 3R"/>
</dbReference>
<dbReference type="Bgee" id="FBgn0038818">
    <property type="expression patterns" value="Expressed in excretory cell and 72 other cell types or tissues"/>
</dbReference>
<dbReference type="ExpressionAtlas" id="Q8T062">
    <property type="expression patterns" value="baseline and differential"/>
</dbReference>
<dbReference type="GO" id="GO:0005615">
    <property type="term" value="C:extracellular space"/>
    <property type="evidence" value="ECO:0000314"/>
    <property type="project" value="FlyBase"/>
</dbReference>
<dbReference type="GO" id="GO:0016020">
    <property type="term" value="C:membrane"/>
    <property type="evidence" value="ECO:0000255"/>
    <property type="project" value="FlyBase"/>
</dbReference>
<dbReference type="GO" id="GO:0005886">
    <property type="term" value="C:plasma membrane"/>
    <property type="evidence" value="ECO:0000318"/>
    <property type="project" value="GO_Central"/>
</dbReference>
<dbReference type="GO" id="GO:0016529">
    <property type="term" value="C:sarcoplasmic reticulum"/>
    <property type="evidence" value="ECO:0000314"/>
    <property type="project" value="FlyBase"/>
</dbReference>
<dbReference type="GO" id="GO:0004175">
    <property type="term" value="F:endopeptidase activity"/>
    <property type="evidence" value="ECO:0000314"/>
    <property type="project" value="FlyBase"/>
</dbReference>
<dbReference type="GO" id="GO:0046872">
    <property type="term" value="F:metal ion binding"/>
    <property type="evidence" value="ECO:0007669"/>
    <property type="project" value="UniProtKB-KW"/>
</dbReference>
<dbReference type="GO" id="GO:0004222">
    <property type="term" value="F:metalloendopeptidase activity"/>
    <property type="evidence" value="ECO:0000318"/>
    <property type="project" value="GO_Central"/>
</dbReference>
<dbReference type="GO" id="GO:0008237">
    <property type="term" value="F:metallopeptidase activity"/>
    <property type="evidence" value="ECO:0000255"/>
    <property type="project" value="FlyBase"/>
</dbReference>
<dbReference type="GO" id="GO:0016485">
    <property type="term" value="P:protein processing"/>
    <property type="evidence" value="ECO:0000318"/>
    <property type="project" value="GO_Central"/>
</dbReference>
<dbReference type="GO" id="GO:0006508">
    <property type="term" value="P:proteolysis"/>
    <property type="evidence" value="ECO:0000314"/>
    <property type="project" value="FlyBase"/>
</dbReference>
<dbReference type="CDD" id="cd08662">
    <property type="entry name" value="M13"/>
    <property type="match status" value="1"/>
</dbReference>
<dbReference type="FunFam" id="3.40.390.10:FF:000076">
    <property type="entry name" value="membrane metallo-endopeptidase-like 1"/>
    <property type="match status" value="1"/>
</dbReference>
<dbReference type="Gene3D" id="3.40.390.10">
    <property type="entry name" value="Collagenase (Catalytic Domain)"/>
    <property type="match status" value="2"/>
</dbReference>
<dbReference type="Gene3D" id="1.10.1380.10">
    <property type="entry name" value="Neutral endopeptidase , domain2"/>
    <property type="match status" value="1"/>
</dbReference>
<dbReference type="InterPro" id="IPR024079">
    <property type="entry name" value="MetalloPept_cat_dom_sf"/>
</dbReference>
<dbReference type="InterPro" id="IPR000718">
    <property type="entry name" value="Peptidase_M13"/>
</dbReference>
<dbReference type="InterPro" id="IPR018497">
    <property type="entry name" value="Peptidase_M13_C"/>
</dbReference>
<dbReference type="InterPro" id="IPR042089">
    <property type="entry name" value="Peptidase_M13_dom_2"/>
</dbReference>
<dbReference type="InterPro" id="IPR008753">
    <property type="entry name" value="Peptidase_M13_N"/>
</dbReference>
<dbReference type="PANTHER" id="PTHR11733:SF238">
    <property type="entry name" value="FI07649P-RELATED"/>
    <property type="match status" value="1"/>
</dbReference>
<dbReference type="PANTHER" id="PTHR11733">
    <property type="entry name" value="ZINC METALLOPROTEASE FAMILY M13 NEPRILYSIN-RELATED"/>
    <property type="match status" value="1"/>
</dbReference>
<dbReference type="Pfam" id="PF01431">
    <property type="entry name" value="Peptidase_M13"/>
    <property type="match status" value="1"/>
</dbReference>
<dbReference type="Pfam" id="PF05649">
    <property type="entry name" value="Peptidase_M13_N"/>
    <property type="match status" value="2"/>
</dbReference>
<dbReference type="PRINTS" id="PR00786">
    <property type="entry name" value="NEPRILYSIN"/>
</dbReference>
<dbReference type="SUPFAM" id="SSF55486">
    <property type="entry name" value="Metalloproteases ('zincins'), catalytic domain"/>
    <property type="match status" value="1"/>
</dbReference>
<dbReference type="PROSITE" id="PS51885">
    <property type="entry name" value="NEPRILYSIN"/>
    <property type="match status" value="1"/>
</dbReference>
<dbReference type="PROSITE" id="PS00142">
    <property type="entry name" value="ZINC_PROTEASE"/>
    <property type="match status" value="1"/>
</dbReference>
<feature type="chain" id="PRO_0000441993" description="Neprilysin-4">
    <location>
        <begin position="1"/>
        <end position="1040"/>
    </location>
</feature>
<feature type="topological domain" description="Cytoplasmic" evidence="13">
    <location>
        <begin position="1"/>
        <end position="55"/>
    </location>
</feature>
<feature type="transmembrane region" description="Helical; Signal-anchor for type II membrane protein" evidence="2">
    <location>
        <begin position="56"/>
        <end position="76"/>
    </location>
</feature>
<feature type="topological domain" description="Extracellular" evidence="13">
    <location>
        <begin position="77"/>
        <end position="1040"/>
    </location>
</feature>
<feature type="domain" description="Peptidase M13" evidence="4">
    <location>
        <begin position="251"/>
        <end position="1040"/>
    </location>
</feature>
<feature type="region of interest" description="Required for maintaining muscle integrity" evidence="8">
    <location>
        <begin position="1"/>
        <end position="45"/>
    </location>
</feature>
<feature type="region of interest" description="Disordered" evidence="6">
    <location>
        <begin position="1"/>
        <end position="27"/>
    </location>
</feature>
<feature type="active site" evidence="4 5">
    <location>
        <position position="873"/>
    </location>
</feature>
<feature type="active site" description="Proton donor" evidence="4">
    <location>
        <position position="938"/>
    </location>
</feature>
<feature type="binding site" evidence="4 5">
    <location>
        <position position="872"/>
    </location>
    <ligand>
        <name>Zn(2+)</name>
        <dbReference type="ChEBI" id="CHEBI:29105"/>
        <note>catalytic</note>
    </ligand>
</feature>
<feature type="binding site" evidence="4 5">
    <location>
        <position position="876"/>
    </location>
    <ligand>
        <name>Zn(2+)</name>
        <dbReference type="ChEBI" id="CHEBI:29105"/>
        <note>catalytic</note>
    </ligand>
</feature>
<feature type="binding site" evidence="4">
    <location>
        <position position="934"/>
    </location>
    <ligand>
        <name>Zn(2+)</name>
        <dbReference type="ChEBI" id="CHEBI:29105"/>
        <note>catalytic</note>
    </ligand>
</feature>
<feature type="glycosylation site" description="N-linked (GlcNAc...) asparagine" evidence="3">
    <location>
        <position position="387"/>
    </location>
</feature>
<feature type="glycosylation site" description="N-linked (GlcNAc...) asparagine" evidence="3">
    <location>
        <position position="593"/>
    </location>
</feature>
<feature type="glycosylation site" description="N-linked (GlcNAc...) asparagine" evidence="3">
    <location>
        <position position="723"/>
    </location>
</feature>
<feature type="glycosylation site" description="N-linked (GlcNAc...) asparagine" evidence="3">
    <location>
        <position position="819"/>
    </location>
</feature>
<feature type="glycosylation site" description="N-linked (GlcNAc...) asparagine" evidence="3">
    <location>
        <position position="916"/>
    </location>
</feature>
<feature type="glycosylation site" description="N-linked (GlcNAc...) asparagine" evidence="3">
    <location>
        <position position="969"/>
    </location>
</feature>
<feature type="disulfide bond" evidence="4">
    <location>
        <begin position="277"/>
        <end position="1025"/>
    </location>
</feature>
<feature type="disulfide bond" evidence="4">
    <location>
        <begin position="285"/>
        <end position="985"/>
    </location>
</feature>
<feature type="disulfide bond" evidence="4">
    <location>
        <begin position="452"/>
        <end position="700"/>
    </location>
</feature>
<feature type="disulfide bond" evidence="4">
    <location>
        <begin position="909"/>
        <end position="1037"/>
    </location>
</feature>
<feature type="splice variant" id="VSP_059156" description="In isoform B." evidence="13">
    <original>MSRHSQLKLAMPSVHGAPATAPGSPMNAKARSVKLGLGVNQRTGRVQWCPGLTCCKMLLLLPV</original>
    <variation>M</variation>
    <location>
        <begin position="1"/>
        <end position="63"/>
    </location>
</feature>
<feature type="mutagenesis site" description="No effect on its function in maintaining muscle integrity." evidence="8">
    <original>E</original>
    <variation>Q</variation>
    <location>
        <position position="873"/>
    </location>
</feature>
<protein>
    <recommendedName>
        <fullName evidence="12">Neprilysin-4</fullName>
        <ecNumber evidence="7">3.4.24.11</ecNumber>
    </recommendedName>
</protein>
<sequence length="1040" mass="119577">MSRHSQLKLAMPSVHGAPATAPGSPMNAKARSVKLGLGVNQRTGRVQWCPGLTCCKMLLLLPVVMLPLTLVLILIMRLDGMLAALQLNEQRMRDLRNSHSEVPVYMEDYEALLPEGSTYNDLINEEFILPASKRTQLQILAAERARRCQPYRYGNGESMELEERNTLMKDSRTSFLPLGIPRECLGSGIELDIKPIDEEAYQRQKKRYQDIAPYWLEKIRIRERREAERHAEEASAEISEATAALQSFWNEEGTREGIRMTQAKTMKRYMDNKVDPCVDFYKYACGNWERLHPIPKDKAGFDTFEMLRESLDLVLRNLLEKNTPVHSAAELRKSPVRNTLFKLNEQGEGEGEADQAAELTAERLRRHIVSKRQLLNRVLVRYKRYTNGTKRKRLIETPRERTKEEEAAPPVVLPKDKTKDKSDNEEQLHVPTDFLKPHQDAQLKAKNLYRSCVNSAVLAKRGLEPLHTLIRELGGWPVLESQWSESNFNWQVLAATLRRYNNDILIVQWVGADIKNSEENIVQFDQTGLGLPTREYFLQPSNAKYLQAYQRYMAEVMHKMGASKADAQRVASELVAFETQLAGITAPAEQRLNVTKLYKRMTLDQLQAVVPEIKWRAYLQSLQDREVLGTEEVVIYAVEYMSKLVTLLDETDPRTVSNYMMWRFVRHRINNVDDRFDDIKQSFYHALFGREESPQRWKVCIAQVNTNMGMAVGSMFVSRYFDNNSKRDTLRMTHDLQQAFRDILKTTDWLDDTTKQLAEEKVNAMSLKIGYPDFILNPSELNSKYAGIEIYPEKYFENTLNVLLHTAKTEQAKLHERVNKTNWQTAPAIVNAYYSRNKNQIMFPAGILQPPFYHRHFPKSLNFGGIGVVIGHELTHGFDDKGRLFDRNGNIHKWWTDSSIRGFDERARCIIAQYSNYTVEEVGIVLNGESTQGENIADNGGLRQAFHAYQRWLKEHPSEVSDEILPGLNMTGPQLFFLNFGQVWCGAMRPEAIRNKLNTAIHSPGRFRVIGTLSNSVDFAREFNCPLGSPMNPQKKCSVW</sequence>
<evidence type="ECO:0000250" key="1">
    <source>
        <dbReference type="UniProtKB" id="P08473"/>
    </source>
</evidence>
<evidence type="ECO:0000255" key="2"/>
<evidence type="ECO:0000255" key="3">
    <source>
        <dbReference type="PROSITE-ProRule" id="PRU00498"/>
    </source>
</evidence>
<evidence type="ECO:0000255" key="4">
    <source>
        <dbReference type="PROSITE-ProRule" id="PRU01233"/>
    </source>
</evidence>
<evidence type="ECO:0000255" key="5">
    <source>
        <dbReference type="PROSITE-ProRule" id="PRU10095"/>
    </source>
</evidence>
<evidence type="ECO:0000256" key="6">
    <source>
        <dbReference type="SAM" id="MobiDB-lite"/>
    </source>
</evidence>
<evidence type="ECO:0000269" key="7">
    <source>
    </source>
</evidence>
<evidence type="ECO:0000269" key="8">
    <source>
    </source>
</evidence>
<evidence type="ECO:0000269" key="9">
    <source>
    </source>
</evidence>
<evidence type="ECO:0000269" key="10">
    <source>
    </source>
</evidence>
<evidence type="ECO:0000269" key="11">
    <source>
    </source>
</evidence>
<evidence type="ECO:0000303" key="12">
    <source>
    </source>
</evidence>
<evidence type="ECO:0000305" key="13"/>
<evidence type="ECO:0000312" key="14">
    <source>
        <dbReference type="EMBL" id="AAL39680.1"/>
    </source>
</evidence>
<evidence type="ECO:0000312" key="15">
    <source>
        <dbReference type="EMBL" id="ACV53077.1"/>
    </source>
</evidence>
<evidence type="ECO:0000312" key="16">
    <source>
        <dbReference type="FlyBase" id="FBgn0038818"/>
    </source>
</evidence>
<evidence type="ECO:0000312" key="17">
    <source>
        <dbReference type="Proteomes" id="UP000000803"/>
    </source>
</evidence>
<proteinExistence type="evidence at protein level"/>
<gene>
    <name evidence="12 16" type="primary">Nep4</name>
    <name evidence="16" type="ORF">CG4058</name>
</gene>
<name>NEP4_DROME</name>
<reference evidence="17" key="1">
    <citation type="journal article" date="2000" name="Science">
        <title>The genome sequence of Drosophila melanogaster.</title>
        <authorList>
            <person name="Adams M.D."/>
            <person name="Celniker S.E."/>
            <person name="Holt R.A."/>
            <person name="Evans C.A."/>
            <person name="Gocayne J.D."/>
            <person name="Amanatides P.G."/>
            <person name="Scherer S.E."/>
            <person name="Li P.W."/>
            <person name="Hoskins R.A."/>
            <person name="Galle R.F."/>
            <person name="George R.A."/>
            <person name="Lewis S.E."/>
            <person name="Richards S."/>
            <person name="Ashburner M."/>
            <person name="Henderson S.N."/>
            <person name="Sutton G.G."/>
            <person name="Wortman J.R."/>
            <person name="Yandell M.D."/>
            <person name="Zhang Q."/>
            <person name="Chen L.X."/>
            <person name="Brandon R.C."/>
            <person name="Rogers Y.-H.C."/>
            <person name="Blazej R.G."/>
            <person name="Champe M."/>
            <person name="Pfeiffer B.D."/>
            <person name="Wan K.H."/>
            <person name="Doyle C."/>
            <person name="Baxter E.G."/>
            <person name="Helt G."/>
            <person name="Nelson C.R."/>
            <person name="Miklos G.L.G."/>
            <person name="Abril J.F."/>
            <person name="Agbayani A."/>
            <person name="An H.-J."/>
            <person name="Andrews-Pfannkoch C."/>
            <person name="Baldwin D."/>
            <person name="Ballew R.M."/>
            <person name="Basu A."/>
            <person name="Baxendale J."/>
            <person name="Bayraktaroglu L."/>
            <person name="Beasley E.M."/>
            <person name="Beeson K.Y."/>
            <person name="Benos P.V."/>
            <person name="Berman B.P."/>
            <person name="Bhandari D."/>
            <person name="Bolshakov S."/>
            <person name="Borkova D."/>
            <person name="Botchan M.R."/>
            <person name="Bouck J."/>
            <person name="Brokstein P."/>
            <person name="Brottier P."/>
            <person name="Burtis K.C."/>
            <person name="Busam D.A."/>
            <person name="Butler H."/>
            <person name="Cadieu E."/>
            <person name="Center A."/>
            <person name="Chandra I."/>
            <person name="Cherry J.M."/>
            <person name="Cawley S."/>
            <person name="Dahlke C."/>
            <person name="Davenport L.B."/>
            <person name="Davies P."/>
            <person name="de Pablos B."/>
            <person name="Delcher A."/>
            <person name="Deng Z."/>
            <person name="Mays A.D."/>
            <person name="Dew I."/>
            <person name="Dietz S.M."/>
            <person name="Dodson K."/>
            <person name="Doup L.E."/>
            <person name="Downes M."/>
            <person name="Dugan-Rocha S."/>
            <person name="Dunkov B.C."/>
            <person name="Dunn P."/>
            <person name="Durbin K.J."/>
            <person name="Evangelista C.C."/>
            <person name="Ferraz C."/>
            <person name="Ferriera S."/>
            <person name="Fleischmann W."/>
            <person name="Fosler C."/>
            <person name="Gabrielian A.E."/>
            <person name="Garg N.S."/>
            <person name="Gelbart W.M."/>
            <person name="Glasser K."/>
            <person name="Glodek A."/>
            <person name="Gong F."/>
            <person name="Gorrell J.H."/>
            <person name="Gu Z."/>
            <person name="Guan P."/>
            <person name="Harris M."/>
            <person name="Harris N.L."/>
            <person name="Harvey D.A."/>
            <person name="Heiman T.J."/>
            <person name="Hernandez J.R."/>
            <person name="Houck J."/>
            <person name="Hostin D."/>
            <person name="Houston K.A."/>
            <person name="Howland T.J."/>
            <person name="Wei M.-H."/>
            <person name="Ibegwam C."/>
            <person name="Jalali M."/>
            <person name="Kalush F."/>
            <person name="Karpen G.H."/>
            <person name="Ke Z."/>
            <person name="Kennison J.A."/>
            <person name="Ketchum K.A."/>
            <person name="Kimmel B.E."/>
            <person name="Kodira C.D."/>
            <person name="Kraft C.L."/>
            <person name="Kravitz S."/>
            <person name="Kulp D."/>
            <person name="Lai Z."/>
            <person name="Lasko P."/>
            <person name="Lei Y."/>
            <person name="Levitsky A.A."/>
            <person name="Li J.H."/>
            <person name="Li Z."/>
            <person name="Liang Y."/>
            <person name="Lin X."/>
            <person name="Liu X."/>
            <person name="Mattei B."/>
            <person name="McIntosh T.C."/>
            <person name="McLeod M.P."/>
            <person name="McPherson D."/>
            <person name="Merkulov G."/>
            <person name="Milshina N.V."/>
            <person name="Mobarry C."/>
            <person name="Morris J."/>
            <person name="Moshrefi A."/>
            <person name="Mount S.M."/>
            <person name="Moy M."/>
            <person name="Murphy B."/>
            <person name="Murphy L."/>
            <person name="Muzny D.M."/>
            <person name="Nelson D.L."/>
            <person name="Nelson D.R."/>
            <person name="Nelson K.A."/>
            <person name="Nixon K."/>
            <person name="Nusskern D.R."/>
            <person name="Pacleb J.M."/>
            <person name="Palazzolo M."/>
            <person name="Pittman G.S."/>
            <person name="Pan S."/>
            <person name="Pollard J."/>
            <person name="Puri V."/>
            <person name="Reese M.G."/>
            <person name="Reinert K."/>
            <person name="Remington K."/>
            <person name="Saunders R.D.C."/>
            <person name="Scheeler F."/>
            <person name="Shen H."/>
            <person name="Shue B.C."/>
            <person name="Siden-Kiamos I."/>
            <person name="Simpson M."/>
            <person name="Skupski M.P."/>
            <person name="Smith T.J."/>
            <person name="Spier E."/>
            <person name="Spradling A.C."/>
            <person name="Stapleton M."/>
            <person name="Strong R."/>
            <person name="Sun E."/>
            <person name="Svirskas R."/>
            <person name="Tector C."/>
            <person name="Turner R."/>
            <person name="Venter E."/>
            <person name="Wang A.H."/>
            <person name="Wang X."/>
            <person name="Wang Z.-Y."/>
            <person name="Wassarman D.A."/>
            <person name="Weinstock G.M."/>
            <person name="Weissenbach J."/>
            <person name="Williams S.M."/>
            <person name="Woodage T."/>
            <person name="Worley K.C."/>
            <person name="Wu D."/>
            <person name="Yang S."/>
            <person name="Yao Q.A."/>
            <person name="Ye J."/>
            <person name="Yeh R.-F."/>
            <person name="Zaveri J.S."/>
            <person name="Zhan M."/>
            <person name="Zhang G."/>
            <person name="Zhao Q."/>
            <person name="Zheng L."/>
            <person name="Zheng X.H."/>
            <person name="Zhong F.N."/>
            <person name="Zhong W."/>
            <person name="Zhou X."/>
            <person name="Zhu S.C."/>
            <person name="Zhu X."/>
            <person name="Smith H.O."/>
            <person name="Gibbs R.A."/>
            <person name="Myers E.W."/>
            <person name="Rubin G.M."/>
            <person name="Venter J.C."/>
        </authorList>
    </citation>
    <scope>NUCLEOTIDE SEQUENCE [LARGE SCALE GENOMIC DNA]</scope>
    <source>
        <strain evidence="17">Berkeley</strain>
    </source>
</reference>
<reference evidence="17" key="2">
    <citation type="journal article" date="2002" name="Genome Biol.">
        <title>Annotation of the Drosophila melanogaster euchromatic genome: a systematic review.</title>
        <authorList>
            <person name="Misra S."/>
            <person name="Crosby M.A."/>
            <person name="Mungall C.J."/>
            <person name="Matthews B.B."/>
            <person name="Campbell K.S."/>
            <person name="Hradecky P."/>
            <person name="Huang Y."/>
            <person name="Kaminker J.S."/>
            <person name="Millburn G.H."/>
            <person name="Prochnik S.E."/>
            <person name="Smith C.D."/>
            <person name="Tupy J.L."/>
            <person name="Whitfield E.J."/>
            <person name="Bayraktaroglu L."/>
            <person name="Berman B.P."/>
            <person name="Bettencourt B.R."/>
            <person name="Celniker S.E."/>
            <person name="de Grey A.D.N.J."/>
            <person name="Drysdale R.A."/>
            <person name="Harris N.L."/>
            <person name="Richter J."/>
            <person name="Russo S."/>
            <person name="Schroeder A.J."/>
            <person name="Shu S.Q."/>
            <person name="Stapleton M."/>
            <person name="Yamada C."/>
            <person name="Ashburner M."/>
            <person name="Gelbart W.M."/>
            <person name="Rubin G.M."/>
            <person name="Lewis S.E."/>
        </authorList>
    </citation>
    <scope>GENOME REANNOTATION</scope>
    <source>
        <strain evidence="17">Berkeley</strain>
    </source>
</reference>
<reference evidence="14" key="3">
    <citation type="journal article" date="2002" name="Genome Biol.">
        <title>A Drosophila full-length cDNA resource.</title>
        <authorList>
            <person name="Stapleton M."/>
            <person name="Carlson J.W."/>
            <person name="Brokstein P."/>
            <person name="Yu C."/>
            <person name="Champe M."/>
            <person name="George R.A."/>
            <person name="Guarin H."/>
            <person name="Kronmiller B."/>
            <person name="Pacleb J.M."/>
            <person name="Park S."/>
            <person name="Wan K.H."/>
            <person name="Rubin G.M."/>
            <person name="Celniker S.E."/>
        </authorList>
    </citation>
    <scope>NUCLEOTIDE SEQUENCE [LARGE SCALE MRNA] (ISOFORM A)</scope>
    <source>
        <strain evidence="14">Berkeley</strain>
        <tissue evidence="14">Embryo</tissue>
    </source>
</reference>
<reference evidence="15" key="4">
    <citation type="submission" date="2009-09" db="EMBL/GenBank/DDBJ databases">
        <authorList>
            <person name="Carlson J."/>
            <person name="Booth B."/>
            <person name="Frise E."/>
            <person name="Park S."/>
            <person name="Wan K."/>
            <person name="Yu C."/>
            <person name="Celniker S."/>
        </authorList>
    </citation>
    <scope>NUCLEOTIDE SEQUENCE [LARGE SCALE MRNA] (ISOFORM B)</scope>
    <source>
        <strain evidence="15">Berkeley</strain>
        <tissue evidence="15">Head</tissue>
    </source>
</reference>
<reference evidence="13" key="5">
    <citation type="journal article" date="2009" name="J. Exp. Biol.">
        <title>Neprilysin 4, a novel endopeptidase from Drosophila melanogaster, displays distinct substrate specificities and exceptional solubility states.</title>
        <authorList>
            <person name="Meyer H."/>
            <person name="Panz M."/>
            <person name="Zmojdzian M."/>
            <person name="Jagla K."/>
            <person name="Paululat A."/>
        </authorList>
    </citation>
    <scope>FUNCTION (ISOFORM A)</scope>
    <scope>CATALYTIC ACTIVITY (ISOFORM A)</scope>
    <scope>BIOPHYSICOCHEMICAL PROPERTIES (ISOFORM A)</scope>
    <scope>SUBCELLULAR LOCATION</scope>
    <scope>TISSUE SPECIFICITY</scope>
    <scope>DEVELOPMENTAL STAGE</scope>
</reference>
<reference evidence="13" key="6">
    <citation type="journal article" date="2012" name="Biol. Cell">
        <title>A novel role for the non-catalytic intracellular domain of Neprilysins in muscle physiology.</title>
        <authorList>
            <person name="Panz M."/>
            <person name="Vitos-Faleato J."/>
            <person name="Jendretzki A."/>
            <person name="Heinisch J.J."/>
            <person name="Paululat A."/>
            <person name="Meyer H."/>
        </authorList>
    </citation>
    <scope>FUNCTION (ISOFORM A)</scope>
    <scope>INTERACTION WITH CG3534 (ISOFORM A)</scope>
    <scope>SUBCELLULAR LOCATION (ISOFORM A)</scope>
    <scope>TISSUE SPECIFICITY</scope>
    <scope>DISRUPTION PHENOTYPE</scope>
    <scope>MUTAGENESIS OF GLU-873</scope>
</reference>
<reference evidence="13" key="7">
    <citation type="journal article" date="2014" name="Genetics">
        <title>Neprilysins: an evolutionarily conserved family of metalloproteases that play important roles in reproduction in Drosophila.</title>
        <authorList>
            <person name="Sitnik J.L."/>
            <person name="Francis C."/>
            <person name="Hens K."/>
            <person name="Huybrechts R."/>
            <person name="Wolfner M.F."/>
            <person name="Callaerts P."/>
        </authorList>
    </citation>
    <scope>FUNCTION</scope>
    <scope>TISSUE SPECIFICITY</scope>
    <scope>DISRUPTION PHENOTYPE</scope>
</reference>
<reference evidence="13" key="8">
    <citation type="journal article" date="2016" name="Elife">
        <title>Drosophila neprilysins control insulin signaling and food intake via cleavage of regulatory peptides.</title>
        <authorList>
            <person name="Hallier B."/>
            <person name="Schiemann R."/>
            <person name="Cordes E."/>
            <person name="Vitos-Faleato J."/>
            <person name="Walter S."/>
            <person name="Heinisch J.J."/>
            <person name="Malmendal A."/>
            <person name="Paululat A."/>
            <person name="Meyer H."/>
        </authorList>
    </citation>
    <scope>FUNCTION</scope>
    <scope>CATALYTIC ACTIVITY</scope>
    <scope>SUBCELLULAR LOCATION (ISOFORM A)</scope>
    <scope>DISRUPTION PHENOTYPE</scope>
</reference>
<reference evidence="13" key="9">
    <citation type="journal article" date="2016" name="J. Neurosci.">
        <title>Drosophila neprilysins are involved in middle-term and long-term memory.</title>
        <authorList>
            <person name="Turrel O."/>
            <person name="Lampin-Saint-Amaux A."/>
            <person name="Preat T."/>
            <person name="Goguel V."/>
        </authorList>
    </citation>
    <scope>FUNCTION</scope>
    <scope>DISRUPTION PHENOTYPE</scope>
</reference>
<keyword id="KW-0024">Alternative initiation</keyword>
<keyword id="KW-1003">Cell membrane</keyword>
<keyword id="KW-0963">Cytoplasm</keyword>
<keyword id="KW-1015">Disulfide bond</keyword>
<keyword id="KW-0325">Glycoprotein</keyword>
<keyword id="KW-0378">Hydrolase</keyword>
<keyword id="KW-0472">Membrane</keyword>
<keyword id="KW-0479">Metal-binding</keyword>
<keyword id="KW-0482">Metalloprotease</keyword>
<keyword id="KW-0645">Protease</keyword>
<keyword id="KW-1185">Reference proteome</keyword>
<keyword id="KW-0703">Sarcoplasmic reticulum</keyword>
<keyword id="KW-0735">Signal-anchor</keyword>
<keyword id="KW-0812">Transmembrane</keyword>
<keyword id="KW-1133">Transmembrane helix</keyword>
<keyword id="KW-0862">Zinc</keyword>